<comment type="function">
    <text evidence="1 4 5">Non-catalytic component of the WMM complex, a complex that mediates N6-methyladenosine (m6A) methylation of mRNAs, a modification that plays a role in the efficiency of mRNA splicing and is required for sex determination (PubMed:27919077, PubMed:28675155). In the heterodimer formed with Ime4/Mettl3, Mettl14 constitutes the RNA-binding scaffold that recognizes the substrate rather than the catalytic core (By similarity). Required for sex determination and dosage compensation via Sxl alternative splicing: m6A methylation acts as a key regulator of Sxl pre-mRNA and promotes female-specific alternative splicing of Sxl, which determines female physiognomy (PubMed:27919077, PubMed:28675155). M6A methylation is also required for neuronal functions (PubMed:27919077).</text>
</comment>
<comment type="subunit">
    <text evidence="5 6 7">Component of the WMM complex, a N6-methyltransferase complex composed of a catalytic subcomplex, named MAC, and of an associated subcomplex, named MACOM (PubMed:28675155, PubMed:29535189, PubMed:29555755). The MAC subcomplex is composed of Ime4/Mettl3 and Mettl14 (PubMed:28675155, PubMed:29535189, PubMed:29555755). The MACOM subcomplex is composed of fl(2)d, Flacc/Xio, Hakai, vir, and, in some cases of nito (PubMed:29535189, PubMed:29555755).</text>
</comment>
<comment type="subcellular location">
    <subcellularLocation>
        <location evidence="4 5">Nucleus</location>
    </subcellularLocation>
</comment>
<comment type="developmental stage">
    <text evidence="4">Ubiquitously expressed in early embryonic stages with enrichment in the neuroectoderm at later stages.</text>
</comment>
<comment type="disruption phenotype">
    <text evidence="4 5">Flies have a reduced lifespan and exhibit multiple behavioral defects: flight and locomotion are severely affected and they spend more time grooming (PubMed:27919077, PubMed:28675155). They also display a mild held-out wing appearance resulting from failure to fold their wings together over the dorsal surface of the thorax and abdomen (PubMed:27919077, PubMed:28675155).</text>
</comment>
<comment type="similarity">
    <text evidence="2">Belongs to the MT-A70-like family.</text>
</comment>
<gene>
    <name evidence="8 12" type="primary">Mettl14</name>
    <name evidence="9 10" type="synonym">KAR4</name>
    <name evidence="12" type="ORF">CG7818</name>
</gene>
<name>MET14_DROME</name>
<organism>
    <name type="scientific">Drosophila melanogaster</name>
    <name type="common">Fruit fly</name>
    <dbReference type="NCBI Taxonomy" id="7227"/>
    <lineage>
        <taxon>Eukaryota</taxon>
        <taxon>Metazoa</taxon>
        <taxon>Ecdysozoa</taxon>
        <taxon>Arthropoda</taxon>
        <taxon>Hexapoda</taxon>
        <taxon>Insecta</taxon>
        <taxon>Pterygota</taxon>
        <taxon>Neoptera</taxon>
        <taxon>Endopterygota</taxon>
        <taxon>Diptera</taxon>
        <taxon>Brachycera</taxon>
        <taxon>Muscomorpha</taxon>
        <taxon>Ephydroidea</taxon>
        <taxon>Drosophilidae</taxon>
        <taxon>Drosophila</taxon>
        <taxon>Sophophora</taxon>
    </lineage>
</organism>
<sequence length="397" mass="44851">MSDVLKSSQERSRKRRLLLAQTLGLSSVDDLKKALGNAEDINSSRQLNSGGQREEEDGGASSSKKTPNEIIYRDSSTFLKGTQSSNPHNDYCQHFVDTGQRPQNFIRDVGLADRFEEYPKLRELIKLKDKLIQDTASAPMYLKADLKSLDVKTLGAKFDVILIEPPLEEYARAAPSVATVGGAPRVFWNWDDILNLDVGEIAAHRSFVFLWCGSSEGLDMGRNCLKKWGFRRCEDICWIRTNINKPGHSKQLEPKAVFQRTKEHCLMGIKGTVRRSTDGDFIHANVDIDLIISEEEEFGSFEKPIEIFHIIEHFCLGRRRLHLFGRDSSIRPGWLTVGPELTNSNFNSELYQTYFAEAPATGCTSRIELLRPKSPPPNSKVLRGRGRGFPRGRGRPR</sequence>
<feature type="chain" id="PRO_0000325797" description="N(6)-adenosine-methyltransferase non-catalytic subunit METTL14">
    <location>
        <begin position="1"/>
        <end position="397"/>
    </location>
</feature>
<feature type="region of interest" description="Disordered" evidence="3">
    <location>
        <begin position="37"/>
        <end position="67"/>
    </location>
</feature>
<feature type="region of interest" description="Disordered" evidence="3">
    <location>
        <begin position="368"/>
        <end position="397"/>
    </location>
</feature>
<feature type="compositionally biased region" description="Polar residues" evidence="3">
    <location>
        <begin position="40"/>
        <end position="51"/>
    </location>
</feature>
<feature type="compositionally biased region" description="Basic residues" evidence="3">
    <location>
        <begin position="382"/>
        <end position="397"/>
    </location>
</feature>
<dbReference type="EMBL" id="AE014134">
    <property type="protein sequence ID" value="AAF52637.1"/>
    <property type="molecule type" value="Genomic_DNA"/>
</dbReference>
<dbReference type="EMBL" id="AY069354">
    <property type="protein sequence ID" value="AAL39499.1"/>
    <property type="molecule type" value="mRNA"/>
</dbReference>
<dbReference type="RefSeq" id="NP_609205.1">
    <property type="nucleotide sequence ID" value="NM_135361.3"/>
</dbReference>
<dbReference type="SMR" id="Q9VLP7"/>
<dbReference type="BioGRID" id="60264">
    <property type="interactions" value="11"/>
</dbReference>
<dbReference type="ComplexPortal" id="CPX-2344">
    <property type="entry name" value="N6-methyladenosine methyltransferase complex"/>
</dbReference>
<dbReference type="FunCoup" id="Q9VLP7">
    <property type="interactions" value="2127"/>
</dbReference>
<dbReference type="IntAct" id="Q9VLP7">
    <property type="interactions" value="9"/>
</dbReference>
<dbReference type="STRING" id="7227.FBpp0079219"/>
<dbReference type="PaxDb" id="7227-FBpp0079219"/>
<dbReference type="DNASU" id="34138"/>
<dbReference type="EnsemblMetazoa" id="FBtr0079599">
    <property type="protein sequence ID" value="FBpp0079219"/>
    <property type="gene ID" value="FBgn0032016"/>
</dbReference>
<dbReference type="GeneID" id="34138"/>
<dbReference type="KEGG" id="dme:Dmel_CG7818"/>
<dbReference type="UCSC" id="CG7818-RA">
    <property type="organism name" value="d. melanogaster"/>
</dbReference>
<dbReference type="AGR" id="FB:FBgn0032016"/>
<dbReference type="CTD" id="57721"/>
<dbReference type="FlyBase" id="FBgn0032016">
    <property type="gene designation" value="Mettl14"/>
</dbReference>
<dbReference type="VEuPathDB" id="VectorBase:FBgn0032016"/>
<dbReference type="eggNOG" id="KOG2097">
    <property type="taxonomic scope" value="Eukaryota"/>
</dbReference>
<dbReference type="GeneTree" id="ENSGT00550000075003"/>
<dbReference type="HOGENOM" id="CLU_046318_1_0_1"/>
<dbReference type="InParanoid" id="Q9VLP7"/>
<dbReference type="OMA" id="FNSELYQ"/>
<dbReference type="OrthoDB" id="14833at2759"/>
<dbReference type="PhylomeDB" id="Q9VLP7"/>
<dbReference type="Reactome" id="R-DME-72203">
    <property type="pathway name" value="Processing of Capped Intron-Containing Pre-mRNA"/>
</dbReference>
<dbReference type="BioGRID-ORCS" id="34138">
    <property type="hits" value="0 hits in 1 CRISPR screen"/>
</dbReference>
<dbReference type="GenomeRNAi" id="34138"/>
<dbReference type="PRO" id="PR:Q9VLP7"/>
<dbReference type="Proteomes" id="UP000000803">
    <property type="component" value="Chromosome 2L"/>
</dbReference>
<dbReference type="Bgee" id="FBgn0032016">
    <property type="expression patterns" value="Expressed in eye disc (Drosophila) and 45 other cell types or tissues"/>
</dbReference>
<dbReference type="GO" id="GO:0005737">
    <property type="term" value="C:cytoplasm"/>
    <property type="evidence" value="ECO:0000314"/>
    <property type="project" value="FlyBase"/>
</dbReference>
<dbReference type="GO" id="GO:0005634">
    <property type="term" value="C:nucleus"/>
    <property type="evidence" value="ECO:0000314"/>
    <property type="project" value="FlyBase"/>
</dbReference>
<dbReference type="GO" id="GO:0036396">
    <property type="term" value="C:RNA N6-methyladenosine methyltransferase complex"/>
    <property type="evidence" value="ECO:0000314"/>
    <property type="project" value="UniProtKB"/>
</dbReference>
<dbReference type="GO" id="GO:0003729">
    <property type="term" value="F:mRNA binding"/>
    <property type="evidence" value="ECO:0000318"/>
    <property type="project" value="GO_Central"/>
</dbReference>
<dbReference type="GO" id="GO:0030154">
    <property type="term" value="P:cell differentiation"/>
    <property type="evidence" value="ECO:0007669"/>
    <property type="project" value="UniProtKB-KW"/>
</dbReference>
<dbReference type="GO" id="GO:0030237">
    <property type="term" value="P:female sex determination"/>
    <property type="evidence" value="ECO:0000315"/>
    <property type="project" value="FlyBase"/>
</dbReference>
<dbReference type="GO" id="GO:0016556">
    <property type="term" value="P:mRNA modification"/>
    <property type="evidence" value="ECO:0000318"/>
    <property type="project" value="GO_Central"/>
</dbReference>
<dbReference type="GO" id="GO:0006397">
    <property type="term" value="P:mRNA processing"/>
    <property type="evidence" value="ECO:0007669"/>
    <property type="project" value="UniProtKB-KW"/>
</dbReference>
<dbReference type="GO" id="GO:0000381">
    <property type="term" value="P:regulation of alternative mRNA splicing, via spliceosome"/>
    <property type="evidence" value="ECO:0000314"/>
    <property type="project" value="FlyBase"/>
</dbReference>
<dbReference type="GO" id="GO:0001510">
    <property type="term" value="P:RNA methylation"/>
    <property type="evidence" value="ECO:0000250"/>
    <property type="project" value="UniProtKB"/>
</dbReference>
<dbReference type="GO" id="GO:0008380">
    <property type="term" value="P:RNA splicing"/>
    <property type="evidence" value="ECO:0007669"/>
    <property type="project" value="UniProtKB-KW"/>
</dbReference>
<dbReference type="GO" id="GO:0007548">
    <property type="term" value="P:sex differentiation"/>
    <property type="evidence" value="ECO:0007669"/>
    <property type="project" value="UniProtKB-KW"/>
</dbReference>
<dbReference type="InterPro" id="IPR045123">
    <property type="entry name" value="METTL14-like"/>
</dbReference>
<dbReference type="InterPro" id="IPR007757">
    <property type="entry name" value="MT-A70-like"/>
</dbReference>
<dbReference type="InterPro" id="IPR029063">
    <property type="entry name" value="SAM-dependent_MTases_sf"/>
</dbReference>
<dbReference type="PANTHER" id="PTHR13107">
    <property type="entry name" value="N6-ADENOSINE-METHYLTRANSFERASE NON-CATALYTIC SUBUNIT"/>
    <property type="match status" value="1"/>
</dbReference>
<dbReference type="PANTHER" id="PTHR13107:SF0">
    <property type="entry name" value="N6-ADENOSINE-METHYLTRANSFERASE NON-CATALYTIC SUBUNIT"/>
    <property type="match status" value="1"/>
</dbReference>
<dbReference type="Pfam" id="PF05063">
    <property type="entry name" value="MT-A70"/>
    <property type="match status" value="1"/>
</dbReference>
<dbReference type="SUPFAM" id="SSF53335">
    <property type="entry name" value="S-adenosyl-L-methionine-dependent methyltransferases"/>
    <property type="match status" value="1"/>
</dbReference>
<dbReference type="PROSITE" id="PS51143">
    <property type="entry name" value="MT_A70"/>
    <property type="match status" value="1"/>
</dbReference>
<dbReference type="PROSITE" id="PS51592">
    <property type="entry name" value="SAM_MTA70L_2"/>
    <property type="match status" value="1"/>
</dbReference>
<accession>Q9VLP7</accession>
<evidence type="ECO:0000250" key="1">
    <source>
        <dbReference type="UniProtKB" id="Q3UIK4"/>
    </source>
</evidence>
<evidence type="ECO:0000255" key="2">
    <source>
        <dbReference type="PROSITE-ProRule" id="PRU00489"/>
    </source>
</evidence>
<evidence type="ECO:0000256" key="3">
    <source>
        <dbReference type="SAM" id="MobiDB-lite"/>
    </source>
</evidence>
<evidence type="ECO:0000269" key="4">
    <source>
    </source>
</evidence>
<evidence type="ECO:0000269" key="5">
    <source>
    </source>
</evidence>
<evidence type="ECO:0000269" key="6">
    <source>
    </source>
</evidence>
<evidence type="ECO:0000269" key="7">
    <source>
    </source>
</evidence>
<evidence type="ECO:0000303" key="8">
    <source>
    </source>
</evidence>
<evidence type="ECO:0000303" key="9">
    <source>
    </source>
</evidence>
<evidence type="ECO:0000303" key="10">
    <source>
    </source>
</evidence>
<evidence type="ECO:0000305" key="11"/>
<evidence type="ECO:0000312" key="12">
    <source>
        <dbReference type="FlyBase" id="FBgn0032016"/>
    </source>
</evidence>
<reference key="1">
    <citation type="journal article" date="2000" name="Science">
        <title>The genome sequence of Drosophila melanogaster.</title>
        <authorList>
            <person name="Adams M.D."/>
            <person name="Celniker S.E."/>
            <person name="Holt R.A."/>
            <person name="Evans C.A."/>
            <person name="Gocayne J.D."/>
            <person name="Amanatides P.G."/>
            <person name="Scherer S.E."/>
            <person name="Li P.W."/>
            <person name="Hoskins R.A."/>
            <person name="Galle R.F."/>
            <person name="George R.A."/>
            <person name="Lewis S.E."/>
            <person name="Richards S."/>
            <person name="Ashburner M."/>
            <person name="Henderson S.N."/>
            <person name="Sutton G.G."/>
            <person name="Wortman J.R."/>
            <person name="Yandell M.D."/>
            <person name="Zhang Q."/>
            <person name="Chen L.X."/>
            <person name="Brandon R.C."/>
            <person name="Rogers Y.-H.C."/>
            <person name="Blazej R.G."/>
            <person name="Champe M."/>
            <person name="Pfeiffer B.D."/>
            <person name="Wan K.H."/>
            <person name="Doyle C."/>
            <person name="Baxter E.G."/>
            <person name="Helt G."/>
            <person name="Nelson C.R."/>
            <person name="Miklos G.L.G."/>
            <person name="Abril J.F."/>
            <person name="Agbayani A."/>
            <person name="An H.-J."/>
            <person name="Andrews-Pfannkoch C."/>
            <person name="Baldwin D."/>
            <person name="Ballew R.M."/>
            <person name="Basu A."/>
            <person name="Baxendale J."/>
            <person name="Bayraktaroglu L."/>
            <person name="Beasley E.M."/>
            <person name="Beeson K.Y."/>
            <person name="Benos P.V."/>
            <person name="Berman B.P."/>
            <person name="Bhandari D."/>
            <person name="Bolshakov S."/>
            <person name="Borkova D."/>
            <person name="Botchan M.R."/>
            <person name="Bouck J."/>
            <person name="Brokstein P."/>
            <person name="Brottier P."/>
            <person name="Burtis K.C."/>
            <person name="Busam D.A."/>
            <person name="Butler H."/>
            <person name="Cadieu E."/>
            <person name="Center A."/>
            <person name="Chandra I."/>
            <person name="Cherry J.M."/>
            <person name="Cawley S."/>
            <person name="Dahlke C."/>
            <person name="Davenport L.B."/>
            <person name="Davies P."/>
            <person name="de Pablos B."/>
            <person name="Delcher A."/>
            <person name="Deng Z."/>
            <person name="Mays A.D."/>
            <person name="Dew I."/>
            <person name="Dietz S.M."/>
            <person name="Dodson K."/>
            <person name="Doup L.E."/>
            <person name="Downes M."/>
            <person name="Dugan-Rocha S."/>
            <person name="Dunkov B.C."/>
            <person name="Dunn P."/>
            <person name="Durbin K.J."/>
            <person name="Evangelista C.C."/>
            <person name="Ferraz C."/>
            <person name="Ferriera S."/>
            <person name="Fleischmann W."/>
            <person name="Fosler C."/>
            <person name="Gabrielian A.E."/>
            <person name="Garg N.S."/>
            <person name="Gelbart W.M."/>
            <person name="Glasser K."/>
            <person name="Glodek A."/>
            <person name="Gong F."/>
            <person name="Gorrell J.H."/>
            <person name="Gu Z."/>
            <person name="Guan P."/>
            <person name="Harris M."/>
            <person name="Harris N.L."/>
            <person name="Harvey D.A."/>
            <person name="Heiman T.J."/>
            <person name="Hernandez J.R."/>
            <person name="Houck J."/>
            <person name="Hostin D."/>
            <person name="Houston K.A."/>
            <person name="Howland T.J."/>
            <person name="Wei M.-H."/>
            <person name="Ibegwam C."/>
            <person name="Jalali M."/>
            <person name="Kalush F."/>
            <person name="Karpen G.H."/>
            <person name="Ke Z."/>
            <person name="Kennison J.A."/>
            <person name="Ketchum K.A."/>
            <person name="Kimmel B.E."/>
            <person name="Kodira C.D."/>
            <person name="Kraft C.L."/>
            <person name="Kravitz S."/>
            <person name="Kulp D."/>
            <person name="Lai Z."/>
            <person name="Lasko P."/>
            <person name="Lei Y."/>
            <person name="Levitsky A.A."/>
            <person name="Li J.H."/>
            <person name="Li Z."/>
            <person name="Liang Y."/>
            <person name="Lin X."/>
            <person name="Liu X."/>
            <person name="Mattei B."/>
            <person name="McIntosh T.C."/>
            <person name="McLeod M.P."/>
            <person name="McPherson D."/>
            <person name="Merkulov G."/>
            <person name="Milshina N.V."/>
            <person name="Mobarry C."/>
            <person name="Morris J."/>
            <person name="Moshrefi A."/>
            <person name="Mount S.M."/>
            <person name="Moy M."/>
            <person name="Murphy B."/>
            <person name="Murphy L."/>
            <person name="Muzny D.M."/>
            <person name="Nelson D.L."/>
            <person name="Nelson D.R."/>
            <person name="Nelson K.A."/>
            <person name="Nixon K."/>
            <person name="Nusskern D.R."/>
            <person name="Pacleb J.M."/>
            <person name="Palazzolo M."/>
            <person name="Pittman G.S."/>
            <person name="Pan S."/>
            <person name="Pollard J."/>
            <person name="Puri V."/>
            <person name="Reese M.G."/>
            <person name="Reinert K."/>
            <person name="Remington K."/>
            <person name="Saunders R.D.C."/>
            <person name="Scheeler F."/>
            <person name="Shen H."/>
            <person name="Shue B.C."/>
            <person name="Siden-Kiamos I."/>
            <person name="Simpson M."/>
            <person name="Skupski M.P."/>
            <person name="Smith T.J."/>
            <person name="Spier E."/>
            <person name="Spradling A.C."/>
            <person name="Stapleton M."/>
            <person name="Strong R."/>
            <person name="Sun E."/>
            <person name="Svirskas R."/>
            <person name="Tector C."/>
            <person name="Turner R."/>
            <person name="Venter E."/>
            <person name="Wang A.H."/>
            <person name="Wang X."/>
            <person name="Wang Z.-Y."/>
            <person name="Wassarman D.A."/>
            <person name="Weinstock G.M."/>
            <person name="Weissenbach J."/>
            <person name="Williams S.M."/>
            <person name="Woodage T."/>
            <person name="Worley K.C."/>
            <person name="Wu D."/>
            <person name="Yang S."/>
            <person name="Yao Q.A."/>
            <person name="Ye J."/>
            <person name="Yeh R.-F."/>
            <person name="Zaveri J.S."/>
            <person name="Zhan M."/>
            <person name="Zhang G."/>
            <person name="Zhao Q."/>
            <person name="Zheng L."/>
            <person name="Zheng X.H."/>
            <person name="Zhong F.N."/>
            <person name="Zhong W."/>
            <person name="Zhou X."/>
            <person name="Zhu S.C."/>
            <person name="Zhu X."/>
            <person name="Smith H.O."/>
            <person name="Gibbs R.A."/>
            <person name="Myers E.W."/>
            <person name="Rubin G.M."/>
            <person name="Venter J.C."/>
        </authorList>
    </citation>
    <scope>NUCLEOTIDE SEQUENCE [LARGE SCALE GENOMIC DNA]</scope>
    <source>
        <strain>Berkeley</strain>
    </source>
</reference>
<reference key="2">
    <citation type="journal article" date="2002" name="Genome Biol.">
        <title>Annotation of the Drosophila melanogaster euchromatic genome: a systematic review.</title>
        <authorList>
            <person name="Misra S."/>
            <person name="Crosby M.A."/>
            <person name="Mungall C.J."/>
            <person name="Matthews B.B."/>
            <person name="Campbell K.S."/>
            <person name="Hradecky P."/>
            <person name="Huang Y."/>
            <person name="Kaminker J.S."/>
            <person name="Millburn G.H."/>
            <person name="Prochnik S.E."/>
            <person name="Smith C.D."/>
            <person name="Tupy J.L."/>
            <person name="Whitfield E.J."/>
            <person name="Bayraktaroglu L."/>
            <person name="Berman B.P."/>
            <person name="Bettencourt B.R."/>
            <person name="Celniker S.E."/>
            <person name="de Grey A.D.N.J."/>
            <person name="Drysdale R.A."/>
            <person name="Harris N.L."/>
            <person name="Richter J."/>
            <person name="Russo S."/>
            <person name="Schroeder A.J."/>
            <person name="Shu S.Q."/>
            <person name="Stapleton M."/>
            <person name="Yamada C."/>
            <person name="Ashburner M."/>
            <person name="Gelbart W.M."/>
            <person name="Rubin G.M."/>
            <person name="Lewis S.E."/>
        </authorList>
    </citation>
    <scope>GENOME REANNOTATION</scope>
    <source>
        <strain>Berkeley</strain>
    </source>
</reference>
<reference key="3">
    <citation type="journal article" date="2002" name="Genome Biol.">
        <title>A Drosophila full-length cDNA resource.</title>
        <authorList>
            <person name="Stapleton M."/>
            <person name="Carlson J.W."/>
            <person name="Brokstein P."/>
            <person name="Yu C."/>
            <person name="Champe M."/>
            <person name="George R.A."/>
            <person name="Guarin H."/>
            <person name="Kronmiller B."/>
            <person name="Pacleb J.M."/>
            <person name="Park S."/>
            <person name="Wan K.H."/>
            <person name="Rubin G.M."/>
            <person name="Celniker S.E."/>
        </authorList>
    </citation>
    <scope>NUCLEOTIDE SEQUENCE [LARGE SCALE MRNA]</scope>
    <source>
        <strain>Berkeley</strain>
        <tissue>Embryo</tissue>
    </source>
</reference>
<reference key="4">
    <citation type="journal article" date="2016" name="Nature">
        <title>m(6)A modulates neuronal functions and sex determination in Drosophila.</title>
        <authorList>
            <person name="Lence T."/>
            <person name="Akhtar J."/>
            <person name="Bayer M."/>
            <person name="Schmid K."/>
            <person name="Spindler L."/>
            <person name="Ho C.H."/>
            <person name="Kreim N."/>
            <person name="Andrade-Navarro M.A."/>
            <person name="Poeck B."/>
            <person name="Helm M."/>
            <person name="Roignant J.Y."/>
        </authorList>
    </citation>
    <scope>FUNCTION</scope>
    <scope>SUBCELLULAR LOCATION</scope>
    <scope>DISRUPTION PHENOTYPE</scope>
    <scope>DEVELOPMENTAL STAGE</scope>
    <scope>IDENTIFICATION IN THE WMM COMPLEX</scope>
</reference>
<reference key="5">
    <citation type="journal article" date="2016" name="Nature">
        <title>m(6)A potentiates Sxl alternative pre-mRNA splicing for robust Drosophila sex determination.</title>
        <authorList>
            <person name="Haussmann I.U."/>
            <person name="Bodi Z."/>
            <person name="Sanchez-Moran E."/>
            <person name="Mongan N.P."/>
            <person name="Archer N."/>
            <person name="Fray R.G."/>
            <person name="Soller M."/>
        </authorList>
    </citation>
    <scope>NOMENCLATURE</scope>
</reference>
<reference key="6">
    <citation type="journal article" date="2018" name="Genes Dev.">
        <title>Zc3h13/Flacc is required for adenosine methylation by bridging the mRNA-binding factor Rbm15/Spenito to the m6A machinery component Wtap/Fl(2)d.</title>
        <authorList>
            <person name="Knuckles P."/>
            <person name="Lence T."/>
            <person name="Haussmann I.U."/>
            <person name="Jacob D."/>
            <person name="Kreim N."/>
            <person name="Carl S.H."/>
            <person name="Masiello I."/>
            <person name="Hares T."/>
            <person name="Villasenor R."/>
            <person name="Hess D."/>
            <person name="Andrade-Navarro M.A."/>
            <person name="Biggiogera M."/>
            <person name="Helm M."/>
            <person name="Soller M."/>
            <person name="Buehler M."/>
            <person name="Roignant J.Y."/>
        </authorList>
    </citation>
    <scope>IDENTIFICATION IN THE WMM COMPLEX</scope>
</reference>
<reference key="7">
    <citation type="journal article" date="2017" name="Nat. Commun.">
        <title>The m6A pathway facilitates sex determination in Drosophila.</title>
        <authorList>
            <person name="Kan L."/>
            <person name="Grozhik A.V."/>
            <person name="Vedanayagam J."/>
            <person name="Patil D.P."/>
            <person name="Pang N."/>
            <person name="Lim K.S."/>
            <person name="Huang Y.C."/>
            <person name="Joseph B."/>
            <person name="Lin C.J."/>
            <person name="Despic V."/>
            <person name="Guo J."/>
            <person name="Yan D."/>
            <person name="Kondo S."/>
            <person name="Deng W.M."/>
            <person name="Dedon P.C."/>
            <person name="Jaffrey S.R."/>
            <person name="Lai E.C."/>
        </authorList>
    </citation>
    <scope>FUNCTION</scope>
    <scope>IDENTIFICATION IN THE WMM COMPLEX</scope>
    <scope>SUBCELLULAR LOCATION</scope>
    <scope>DISRUPTION PHENOTYPE</scope>
</reference>
<reference key="8">
    <citation type="journal article" date="2018" name="Proc. Natl. Acad. Sci. U.S.A.">
        <title>Xio is a component of the Drosophila sex determination pathway and RNA N6-methyladenosine-methyladenosine methyltransferase complex.</title>
        <authorList>
            <person name="Guo J."/>
            <person name="Tang H.W."/>
            <person name="Li J."/>
            <person name="Perrimon N."/>
            <person name="Yan D."/>
        </authorList>
    </citation>
    <scope>IDENTIFICATION IN THE WMM COMPLEX</scope>
</reference>
<keyword id="KW-0221">Differentiation</keyword>
<keyword id="KW-0507">mRNA processing</keyword>
<keyword id="KW-0508">mRNA splicing</keyword>
<keyword id="KW-0539">Nucleus</keyword>
<keyword id="KW-1185">Reference proteome</keyword>
<keyword id="KW-0694">RNA-binding</keyword>
<keyword id="KW-0726">Sexual differentiation</keyword>
<proteinExistence type="evidence at protein level"/>
<protein>
    <recommendedName>
        <fullName evidence="11">N(6)-adenosine-methyltransferase non-catalytic subunit METTL14</fullName>
    </recommendedName>
    <alternativeName>
        <fullName evidence="9">Karyogamy protein 4</fullName>
    </alternativeName>
    <alternativeName>
        <fullName evidence="8 10">Methyltransferase-like protein 14</fullName>
        <shortName evidence="8">dMettl14</shortName>
    </alternativeName>
</protein>